<sequence>MQLCVALDLEKKEDNLSLLQELKGLDLWAKVGLRSFIRDGAVFLDEIRKIDENFKIFLDLKLYDIPYTMANAALECAKLDIDMLTVHLSSAKSALTALMQRLNALKKRPLIMGVSALTSFSEEEFLMVYNAPLKTQAIKLSAMGKESGIDGVVCSVFESLAIKEALGKDFLTLTPGIRLDQNDKEDQERVANAKEAKQNLSDFIVVGRPIYQAKEPREVVLELLKDC</sequence>
<feature type="chain" id="PRO_0000134547" description="Orotidine 5'-phosphate decarboxylase">
    <location>
        <begin position="1"/>
        <end position="227"/>
    </location>
</feature>
<feature type="active site" description="Proton donor" evidence="1">
    <location>
        <position position="61"/>
    </location>
</feature>
<feature type="binding site" evidence="1">
    <location>
        <position position="8"/>
    </location>
    <ligand>
        <name>substrate</name>
    </ligand>
</feature>
<feature type="binding site" evidence="1">
    <location>
        <position position="30"/>
    </location>
    <ligand>
        <name>substrate</name>
    </ligand>
</feature>
<feature type="binding site" evidence="1">
    <location>
        <begin position="59"/>
        <end position="68"/>
    </location>
    <ligand>
        <name>substrate</name>
    </ligand>
</feature>
<feature type="binding site" evidence="1">
    <location>
        <position position="118"/>
    </location>
    <ligand>
        <name>substrate</name>
    </ligand>
</feature>
<feature type="binding site" evidence="1">
    <location>
        <position position="178"/>
    </location>
    <ligand>
        <name>substrate</name>
    </ligand>
</feature>
<feature type="binding site" evidence="1">
    <location>
        <position position="187"/>
    </location>
    <ligand>
        <name>substrate</name>
    </ligand>
</feature>
<feature type="binding site" evidence="1">
    <location>
        <position position="207"/>
    </location>
    <ligand>
        <name>substrate</name>
    </ligand>
</feature>
<feature type="binding site" evidence="1">
    <location>
        <position position="208"/>
    </location>
    <ligand>
        <name>substrate</name>
    </ligand>
</feature>
<comment type="function">
    <text evidence="1">Catalyzes the decarboxylation of orotidine 5'-monophosphate (OMP) to uridine 5'-monophosphate (UMP).</text>
</comment>
<comment type="catalytic activity">
    <reaction evidence="1">
        <text>orotidine 5'-phosphate + H(+) = UMP + CO2</text>
        <dbReference type="Rhea" id="RHEA:11596"/>
        <dbReference type="ChEBI" id="CHEBI:15378"/>
        <dbReference type="ChEBI" id="CHEBI:16526"/>
        <dbReference type="ChEBI" id="CHEBI:57538"/>
        <dbReference type="ChEBI" id="CHEBI:57865"/>
        <dbReference type="EC" id="4.1.1.23"/>
    </reaction>
</comment>
<comment type="pathway">
    <text evidence="1">Pyrimidine metabolism; UMP biosynthesis via de novo pathway; UMP from orotate: step 2/2.</text>
</comment>
<comment type="subunit">
    <text evidence="1">Homodimer.</text>
</comment>
<comment type="similarity">
    <text evidence="1">Belongs to the OMP decarboxylase family. Type 1 subfamily.</text>
</comment>
<protein>
    <recommendedName>
        <fullName evidence="1">Orotidine 5'-phosphate decarboxylase</fullName>
        <ecNumber evidence="1">4.1.1.23</ecNumber>
    </recommendedName>
    <alternativeName>
        <fullName evidence="1">OMP decarboxylase</fullName>
        <shortName evidence="1">OMPDCase</shortName>
        <shortName evidence="1">OMPdecase</shortName>
    </alternativeName>
</protein>
<evidence type="ECO:0000255" key="1">
    <source>
        <dbReference type="HAMAP-Rule" id="MF_01200"/>
    </source>
</evidence>
<keyword id="KW-0210">Decarboxylase</keyword>
<keyword id="KW-0456">Lyase</keyword>
<keyword id="KW-0665">Pyrimidine biosynthesis</keyword>
<keyword id="KW-1185">Reference proteome</keyword>
<dbReference type="EC" id="4.1.1.23" evidence="1"/>
<dbReference type="EMBL" id="AE000511">
    <property type="protein sequence ID" value="AAD07078.1"/>
    <property type="molecule type" value="Genomic_DNA"/>
</dbReference>
<dbReference type="PIR" id="E64520">
    <property type="entry name" value="E64520"/>
</dbReference>
<dbReference type="RefSeq" id="NP_206807.1">
    <property type="nucleotide sequence ID" value="NC_000915.1"/>
</dbReference>
<dbReference type="RefSeq" id="WP_001175296.1">
    <property type="nucleotide sequence ID" value="NC_018939.1"/>
</dbReference>
<dbReference type="SMR" id="P56155"/>
<dbReference type="DIP" id="DIP-3056N"/>
<dbReference type="FunCoup" id="P56155">
    <property type="interactions" value="256"/>
</dbReference>
<dbReference type="IntAct" id="P56155">
    <property type="interactions" value="16"/>
</dbReference>
<dbReference type="MINT" id="P56155"/>
<dbReference type="STRING" id="85962.HP_0005"/>
<dbReference type="PaxDb" id="85962-C694_00025"/>
<dbReference type="EnsemblBacteria" id="AAD07078">
    <property type="protein sequence ID" value="AAD07078"/>
    <property type="gene ID" value="HP_0005"/>
</dbReference>
<dbReference type="KEGG" id="heo:C694_00025"/>
<dbReference type="KEGG" id="hpy:HP_0005"/>
<dbReference type="PATRIC" id="fig|85962.47.peg.5"/>
<dbReference type="eggNOG" id="COG0284">
    <property type="taxonomic scope" value="Bacteria"/>
</dbReference>
<dbReference type="InParanoid" id="P56155"/>
<dbReference type="OrthoDB" id="9806203at2"/>
<dbReference type="PhylomeDB" id="P56155"/>
<dbReference type="UniPathway" id="UPA00070">
    <property type="reaction ID" value="UER00120"/>
</dbReference>
<dbReference type="Proteomes" id="UP000000429">
    <property type="component" value="Chromosome"/>
</dbReference>
<dbReference type="GO" id="GO:0005829">
    <property type="term" value="C:cytosol"/>
    <property type="evidence" value="ECO:0000318"/>
    <property type="project" value="GO_Central"/>
</dbReference>
<dbReference type="GO" id="GO:0004590">
    <property type="term" value="F:orotidine-5'-phosphate decarboxylase activity"/>
    <property type="evidence" value="ECO:0000318"/>
    <property type="project" value="GO_Central"/>
</dbReference>
<dbReference type="GO" id="GO:0006207">
    <property type="term" value="P:'de novo' pyrimidine nucleobase biosynthetic process"/>
    <property type="evidence" value="ECO:0000318"/>
    <property type="project" value="GO_Central"/>
</dbReference>
<dbReference type="GO" id="GO:0044205">
    <property type="term" value="P:'de novo' UMP biosynthetic process"/>
    <property type="evidence" value="ECO:0007669"/>
    <property type="project" value="UniProtKB-UniRule"/>
</dbReference>
<dbReference type="CDD" id="cd04725">
    <property type="entry name" value="OMP_decarboxylase_like"/>
    <property type="match status" value="1"/>
</dbReference>
<dbReference type="FunFam" id="3.20.20.70:FF:000345">
    <property type="entry name" value="Orotidine 5'-phosphate decarboxylase"/>
    <property type="match status" value="1"/>
</dbReference>
<dbReference type="Gene3D" id="3.20.20.70">
    <property type="entry name" value="Aldolase class I"/>
    <property type="match status" value="1"/>
</dbReference>
<dbReference type="HAMAP" id="MF_01200_B">
    <property type="entry name" value="OMPdecase_type1_B"/>
    <property type="match status" value="1"/>
</dbReference>
<dbReference type="InterPro" id="IPR013785">
    <property type="entry name" value="Aldolase_TIM"/>
</dbReference>
<dbReference type="InterPro" id="IPR014732">
    <property type="entry name" value="OMPdecase"/>
</dbReference>
<dbReference type="InterPro" id="IPR018089">
    <property type="entry name" value="OMPdecase_AS"/>
</dbReference>
<dbReference type="InterPro" id="IPR047596">
    <property type="entry name" value="OMPdecase_bac"/>
</dbReference>
<dbReference type="InterPro" id="IPR001754">
    <property type="entry name" value="OMPdeCOase_dom"/>
</dbReference>
<dbReference type="InterPro" id="IPR011060">
    <property type="entry name" value="RibuloseP-bd_barrel"/>
</dbReference>
<dbReference type="NCBIfam" id="NF001273">
    <property type="entry name" value="PRK00230.1"/>
    <property type="match status" value="1"/>
</dbReference>
<dbReference type="NCBIfam" id="TIGR01740">
    <property type="entry name" value="pyrF"/>
    <property type="match status" value="1"/>
</dbReference>
<dbReference type="PANTHER" id="PTHR32119">
    <property type="entry name" value="OROTIDINE 5'-PHOSPHATE DECARBOXYLASE"/>
    <property type="match status" value="1"/>
</dbReference>
<dbReference type="PANTHER" id="PTHR32119:SF2">
    <property type="entry name" value="OROTIDINE 5'-PHOSPHATE DECARBOXYLASE"/>
    <property type="match status" value="1"/>
</dbReference>
<dbReference type="Pfam" id="PF00215">
    <property type="entry name" value="OMPdecase"/>
    <property type="match status" value="1"/>
</dbReference>
<dbReference type="SMART" id="SM00934">
    <property type="entry name" value="OMPdecase"/>
    <property type="match status" value="1"/>
</dbReference>
<dbReference type="SUPFAM" id="SSF51366">
    <property type="entry name" value="Ribulose-phoshate binding barrel"/>
    <property type="match status" value="1"/>
</dbReference>
<dbReference type="PROSITE" id="PS00156">
    <property type="entry name" value="OMPDECASE"/>
    <property type="match status" value="1"/>
</dbReference>
<accession>P56155</accession>
<gene>
    <name evidence="1" type="primary">pyrF</name>
    <name type="ordered locus">HP_0005</name>
</gene>
<proteinExistence type="inferred from homology"/>
<name>PYRF_HELPY</name>
<reference key="1">
    <citation type="journal article" date="1997" name="Nature">
        <title>The complete genome sequence of the gastric pathogen Helicobacter pylori.</title>
        <authorList>
            <person name="Tomb J.-F."/>
            <person name="White O."/>
            <person name="Kerlavage A.R."/>
            <person name="Clayton R.A."/>
            <person name="Sutton G.G."/>
            <person name="Fleischmann R.D."/>
            <person name="Ketchum K.A."/>
            <person name="Klenk H.-P."/>
            <person name="Gill S.R."/>
            <person name="Dougherty B.A."/>
            <person name="Nelson K.E."/>
            <person name="Quackenbush J."/>
            <person name="Zhou L."/>
            <person name="Kirkness E.F."/>
            <person name="Peterson S.N."/>
            <person name="Loftus B.J."/>
            <person name="Richardson D.L."/>
            <person name="Dodson R.J."/>
            <person name="Khalak H.G."/>
            <person name="Glodek A."/>
            <person name="McKenney K."/>
            <person name="FitzGerald L.M."/>
            <person name="Lee N."/>
            <person name="Adams M.D."/>
            <person name="Hickey E.K."/>
            <person name="Berg D.E."/>
            <person name="Gocayne J.D."/>
            <person name="Utterback T.R."/>
            <person name="Peterson J.D."/>
            <person name="Kelley J.M."/>
            <person name="Cotton M.D."/>
            <person name="Weidman J.F."/>
            <person name="Fujii C."/>
            <person name="Bowman C."/>
            <person name="Watthey L."/>
            <person name="Wallin E."/>
            <person name="Hayes W.S."/>
            <person name="Borodovsky M."/>
            <person name="Karp P.D."/>
            <person name="Smith H.O."/>
            <person name="Fraser C.M."/>
            <person name="Venter J.C."/>
        </authorList>
    </citation>
    <scope>NUCLEOTIDE SEQUENCE [LARGE SCALE GENOMIC DNA]</scope>
    <source>
        <strain>ATCC 700392 / 26695</strain>
    </source>
</reference>
<organism>
    <name type="scientific">Helicobacter pylori (strain ATCC 700392 / 26695)</name>
    <name type="common">Campylobacter pylori</name>
    <dbReference type="NCBI Taxonomy" id="85962"/>
    <lineage>
        <taxon>Bacteria</taxon>
        <taxon>Pseudomonadati</taxon>
        <taxon>Campylobacterota</taxon>
        <taxon>Epsilonproteobacteria</taxon>
        <taxon>Campylobacterales</taxon>
        <taxon>Helicobacteraceae</taxon>
        <taxon>Helicobacter</taxon>
    </lineage>
</organism>